<sequence>MKTPTIPTLLGPDGMTSLREYAGYHGGGSGFGGQLRSWNPPSESVDAALLPNFTRGNARADDLVRNNGYAANAIQLHQDHIVGSFFRLSHRPSWRYLGIGEEEARAFSREVEAAWKEFAEDDCCCIDVERKRTFTMMIREGVAMHAFNGELFVQATWDTSSSRLFRTQFRMVSPKRISNPNNTGDSRNCRAGVQINDSGAALGYYVSEDGYPGWMPQKWTWIPRELPGGRASFIHVFEPVEDGQTRGANVFYSVMEQMKMLDTLQNTQLQSAIVKAMYAATIESELDTQSAMDFILGANSQEQRERLTGWIGEIAAYYAAAPVRLGGAKVPHLMPGDSLNLQTAQDTDNGYSVFEQSLLRYIAAGLGVSYEQLSRNYAQMSYSTARASANESWAYFMGRRKFVASRQASQMFLCWLEEAIVRRVVTLPSKARFSFQEARSAWGNCDWIGSGRMAIDGLKEVQEAVMLIEAGLSTYEKECAKRGDDYQEIFAQQVRETMERRAAGLKPPAWAAAAFESGLRQSTEEEKSDSRAA</sequence>
<dbReference type="EMBL" id="J02459">
    <property type="protein sequence ID" value="AAA96536.1"/>
    <property type="molecule type" value="Genomic_DNA"/>
</dbReference>
<dbReference type="PIR" id="F04333">
    <property type="entry name" value="VHBPBL"/>
</dbReference>
<dbReference type="RefSeq" id="NP_040583.1">
    <property type="nucleotide sequence ID" value="NC_001416.1"/>
</dbReference>
<dbReference type="PDB" id="8K38">
    <property type="method" value="EM"/>
    <property type="resolution" value="3.20 A"/>
    <property type="chains" value="A/B/C/D/E/F/G/H/I/J/K/L=1-533"/>
</dbReference>
<dbReference type="PDB" id="8K39">
    <property type="method" value="EM"/>
    <property type="resolution" value="4.00 A"/>
    <property type="chains" value="U/V/W/X/Y/Z/a/b/c/d/e/f=1-533"/>
</dbReference>
<dbReference type="PDB" id="8XOT">
    <property type="method" value="EM"/>
    <property type="resolution" value="3.51 A"/>
    <property type="chains" value="B/B1/B2/B3/B4/B5/b/b1/b2/b3/b4/b5=1-533"/>
</dbReference>
<dbReference type="PDB" id="8XOU">
    <property type="method" value="EM"/>
    <property type="resolution" value="5.58 A"/>
    <property type="chains" value="B/B1/B2/B3/B4/B5/b/b1/b2/b3/b4/b5=1-533"/>
</dbReference>
<dbReference type="PDB" id="8XOW">
    <property type="method" value="EM"/>
    <property type="resolution" value="3.32 A"/>
    <property type="chains" value="B/B1/B2/B3/B4/B5/b/b1/b2/b3/b4/b5=1-533"/>
</dbReference>
<dbReference type="PDB" id="8XPM">
    <property type="method" value="EM"/>
    <property type="resolution" value="3.90 A"/>
    <property type="chains" value="B/B1/B2/B3/B4/B5/b/b1/b2/b3/b4/b5=1-533"/>
</dbReference>
<dbReference type="PDB" id="8XQB">
    <property type="method" value="EM"/>
    <property type="resolution" value="4.07 A"/>
    <property type="chains" value="B/B1/B2/B3/B4/B5/b/b1/b2/b3/b4/b5=1-533"/>
</dbReference>
<dbReference type="PDBsum" id="8K38"/>
<dbReference type="PDBsum" id="8K39"/>
<dbReference type="PDBsum" id="8XOT"/>
<dbReference type="PDBsum" id="8XOU"/>
<dbReference type="PDBsum" id="8XOW"/>
<dbReference type="PDBsum" id="8XPM"/>
<dbReference type="PDBsum" id="8XQB"/>
<dbReference type="EMDB" id="EMD-36847"/>
<dbReference type="EMDB" id="EMD-36848"/>
<dbReference type="EMDB" id="EMD-38540"/>
<dbReference type="EMDB" id="EMD-38541"/>
<dbReference type="EMDB" id="EMD-38542"/>
<dbReference type="EMDB" id="EMD-38556"/>
<dbReference type="EMDB" id="EMD-38572"/>
<dbReference type="SMR" id="P03710"/>
<dbReference type="TCDB" id="1.W.5.1.1">
    <property type="family name" value="the (lambda) phage portal protein 5 (ppp5) family"/>
</dbReference>
<dbReference type="GeneID" id="2703526"/>
<dbReference type="KEGG" id="vg:2703526"/>
<dbReference type="Proteomes" id="UP000001711">
    <property type="component" value="Genome"/>
</dbReference>
<dbReference type="GO" id="GO:0046798">
    <property type="term" value="C:viral portal complex"/>
    <property type="evidence" value="ECO:0000314"/>
    <property type="project" value="UniProtKB"/>
</dbReference>
<dbReference type="GO" id="GO:0003677">
    <property type="term" value="F:DNA binding"/>
    <property type="evidence" value="ECO:0007669"/>
    <property type="project" value="UniProtKB-KW"/>
</dbReference>
<dbReference type="GO" id="GO:0005198">
    <property type="term" value="F:structural molecule activity"/>
    <property type="evidence" value="ECO:0007669"/>
    <property type="project" value="UniProtKB-UniRule"/>
</dbReference>
<dbReference type="GO" id="GO:0099001">
    <property type="term" value="P:symbiont genome ejection through host cell envelope, long flexible tail mechanism"/>
    <property type="evidence" value="ECO:0007669"/>
    <property type="project" value="UniProtKB-UniRule"/>
</dbReference>
<dbReference type="GO" id="GO:0019068">
    <property type="term" value="P:virion assembly"/>
    <property type="evidence" value="ECO:0007669"/>
    <property type="project" value="UniProtKB-UniRule"/>
</dbReference>
<dbReference type="HAMAP" id="MF_04135">
    <property type="entry name" value="PORTAL_LAMBDA"/>
    <property type="match status" value="1"/>
</dbReference>
<dbReference type="InterPro" id="IPR006429">
    <property type="entry name" value="Phage_lambda_portal"/>
</dbReference>
<dbReference type="NCBIfam" id="TIGR01539">
    <property type="entry name" value="portal_lambda"/>
    <property type="match status" value="1"/>
</dbReference>
<dbReference type="Pfam" id="PF05136">
    <property type="entry name" value="Phage_portal_2"/>
    <property type="match status" value="1"/>
</dbReference>
<comment type="function">
    <text evidence="1 3 4 5 6">Forms the portal vertex of the capsid (PubMed:6228056, PubMed:6232391). This portal plays critical roles in head assembly, genome packaging, neck/tail attachment, and genome ejection (Probable). The portal protein multimerizes as a single ring-shaped homododecamer arranged around a central channel (PubMed:6232391). Binds to the terminase subunits to form the packaging machine (PubMed:7799432).</text>
</comment>
<comment type="subunit">
    <text evidence="4 5">Homododecamer (PubMed:6232391). Interacts with the terminase complex composed of two small and one large terminase subunits (PubMed:7799432).</text>
</comment>
<comment type="subcellular location">
    <subcellularLocation>
        <location evidence="1 3">Virion</location>
    </subcellularLocation>
</comment>
<comment type="PTM">
    <text evidence="1 2">Proteolytically cleaved by the viral protease during capsid maturation.</text>
</comment>
<comment type="similarity">
    <text evidence="1">Belongs to the siphoviridae portal protein family.</text>
</comment>
<comment type="caution">
    <text evidence="6">It is uncertain whether Met-1 or Met-15 is the initiator.</text>
</comment>
<reference key="1">
    <citation type="journal article" date="1982" name="J. Mol. Biol.">
        <title>Nucleotide sequence of bacteriophage lambda DNA.</title>
        <authorList>
            <person name="Sanger F."/>
            <person name="Coulson A.R."/>
            <person name="Hong G.F."/>
            <person name="Hill D.F."/>
            <person name="Petersen G.B."/>
        </authorList>
    </citation>
    <scope>NUCLEOTIDE SEQUENCE [LARGE SCALE GENOMIC DNA]</scope>
</reference>
<reference key="2">
    <citation type="journal article" date="1983" name="Virology">
        <title>Early intermediates in bacteriophage lambda prohead assembly. II. Identification of biologically active intermediates.</title>
        <authorList>
            <person name="Kochan J."/>
            <person name="Murialdo H."/>
        </authorList>
    </citation>
    <scope>FUNCTION</scope>
    <scope>SUBCELLULAR LOCATION</scope>
</reference>
<reference key="3">
    <citation type="journal article" date="1984" name="J. Mol. Biol.">
        <title>Bacteriophage lambda preconnectors. Purification and structure.</title>
        <authorList>
            <person name="Kochan J."/>
            <person name="Carrascosa J.L."/>
            <person name="Murialdo H."/>
        </authorList>
    </citation>
    <scope>FUNCTION</scope>
    <scope>SUBUNIT</scope>
</reference>
<reference key="4">
    <citation type="journal article" date="1995" name="J. Mol. Biol.">
        <title>Specific interaction of terminase, the DNA packaging enzyme of bacteriophage lambda, with the portal protein of the prohead.</title>
        <authorList>
            <person name="Yeo A."/>
            <person name="Feiss M."/>
        </authorList>
    </citation>
    <scope>INTERACTION WITH TERMINASE COMPLEX</scope>
</reference>
<reference key="5">
    <citation type="journal article" date="2010" name="J. Mol. Biol.">
        <title>Assembly and maturation of the bacteriophage lambda procapsid: gpC is the viral protease.</title>
        <authorList>
            <person name="Medina E."/>
            <person name="Wieczorek D."/>
            <person name="Medina E.M."/>
            <person name="Yang Q."/>
            <person name="Feiss M."/>
            <person name="Catalano C.E."/>
        </authorList>
    </citation>
    <scope>PROTEOLYTIC CLEAVAGE</scope>
</reference>
<evidence type="ECO:0000255" key="1">
    <source>
        <dbReference type="HAMAP-Rule" id="MF_04135"/>
    </source>
</evidence>
<evidence type="ECO:0000269" key="2">
    <source>
    </source>
</evidence>
<evidence type="ECO:0000269" key="3">
    <source>
    </source>
</evidence>
<evidence type="ECO:0000269" key="4">
    <source>
    </source>
</evidence>
<evidence type="ECO:0000269" key="5">
    <source>
    </source>
</evidence>
<evidence type="ECO:0000305" key="6"/>
<evidence type="ECO:0007829" key="7">
    <source>
        <dbReference type="PDB" id="8K38"/>
    </source>
</evidence>
<organism>
    <name type="scientific">Escherichia phage lambda</name>
    <name type="common">Bacteriophage lambda</name>
    <dbReference type="NCBI Taxonomy" id="2681611"/>
    <lineage>
        <taxon>Viruses</taxon>
        <taxon>Duplodnaviria</taxon>
        <taxon>Heunggongvirae</taxon>
        <taxon>Uroviricota</taxon>
        <taxon>Caudoviricetes</taxon>
        <taxon>Lambdavirus</taxon>
        <taxon>Lambdavirus lambda</taxon>
    </lineage>
</organism>
<gene>
    <name evidence="1" type="primary">B</name>
    <name type="ordered locus">lambdap04</name>
</gene>
<protein>
    <recommendedName>
        <fullName evidence="1">Portal protein B</fullName>
    </recommendedName>
    <alternativeName>
        <fullName evidence="1">GpB</fullName>
    </alternativeName>
    <alternativeName>
        <fullName evidence="1">Minor capsid protein B</fullName>
    </alternativeName>
    <component>
        <recommendedName>
            <fullName evidence="1">Protein B*</fullName>
        </recommendedName>
    </component>
</protein>
<proteinExistence type="evidence at protein level"/>
<organismHost>
    <name type="scientific">Escherichia coli</name>
    <dbReference type="NCBI Taxonomy" id="562"/>
</organismHost>
<name>PORTL_LAMBD</name>
<keyword id="KW-0002">3D-structure</keyword>
<keyword id="KW-0167">Capsid protein</keyword>
<keyword id="KW-0238">DNA-binding</keyword>
<keyword id="KW-1185">Reference proteome</keyword>
<keyword id="KW-0118">Viral capsid assembly</keyword>
<keyword id="KW-1171">Viral genome ejection through host cell envelope</keyword>
<keyword id="KW-0231">Viral genome packaging</keyword>
<keyword id="KW-1243">Viral long flexible tail ejection system</keyword>
<keyword id="KW-1162">Viral penetration into host cytoplasm</keyword>
<keyword id="KW-1188">Viral release from host cell</keyword>
<keyword id="KW-0946">Virion</keyword>
<keyword id="KW-1160">Virus entry into host cell</keyword>
<feature type="chain" id="PRO_0000003372" description="Portal protein B" evidence="1">
    <location>
        <begin position="1"/>
        <end position="533"/>
    </location>
</feature>
<feature type="chain" id="PRO_0000003373" description="Protein B*" evidence="1">
    <location>
        <begin position="23"/>
        <end position="533"/>
    </location>
</feature>
<feature type="site" description="Cleavage; by viral protease" evidence="1 2">
    <location>
        <begin position="22"/>
        <end position="23"/>
    </location>
</feature>
<feature type="strand" evidence="7">
    <location>
        <begin position="26"/>
        <end position="28"/>
    </location>
</feature>
<feature type="strand" evidence="7">
    <location>
        <begin position="31"/>
        <end position="33"/>
    </location>
</feature>
<feature type="helix" evidence="7">
    <location>
        <begin position="45"/>
        <end position="49"/>
    </location>
</feature>
<feature type="helix" evidence="7">
    <location>
        <begin position="50"/>
        <end position="52"/>
    </location>
</feature>
<feature type="helix" evidence="7">
    <location>
        <begin position="53"/>
        <end position="66"/>
    </location>
</feature>
<feature type="helix" evidence="7">
    <location>
        <begin position="68"/>
        <end position="81"/>
    </location>
</feature>
<feature type="strand" evidence="7">
    <location>
        <begin position="86"/>
        <end position="90"/>
    </location>
</feature>
<feature type="helix" evidence="7">
    <location>
        <begin position="94"/>
        <end position="97"/>
    </location>
</feature>
<feature type="helix" evidence="7">
    <location>
        <begin position="101"/>
        <end position="119"/>
    </location>
</feature>
<feature type="helix" evidence="7">
    <location>
        <begin position="134"/>
        <end position="147"/>
    </location>
</feature>
<feature type="strand" evidence="7">
    <location>
        <begin position="151"/>
        <end position="157"/>
    </location>
</feature>
<feature type="strand" evidence="7">
    <location>
        <begin position="167"/>
        <end position="172"/>
    </location>
</feature>
<feature type="turn" evidence="7">
    <location>
        <begin position="174"/>
        <end position="176"/>
    </location>
</feature>
<feature type="helix" evidence="7">
    <location>
        <begin position="180"/>
        <end position="182"/>
    </location>
</feature>
<feature type="strand" evidence="7">
    <location>
        <begin position="187"/>
        <end position="190"/>
    </location>
</feature>
<feature type="strand" evidence="7">
    <location>
        <begin position="193"/>
        <end position="195"/>
    </location>
</feature>
<feature type="strand" evidence="7">
    <location>
        <begin position="197"/>
        <end position="199"/>
    </location>
</feature>
<feature type="strand" evidence="7">
    <location>
        <begin position="201"/>
        <end position="207"/>
    </location>
</feature>
<feature type="strand" evidence="7">
    <location>
        <begin position="219"/>
        <end position="225"/>
    </location>
</feature>
<feature type="strand" evidence="7">
    <location>
        <begin position="233"/>
        <end position="236"/>
    </location>
</feature>
<feature type="strand" evidence="7">
    <location>
        <begin position="241"/>
        <end position="243"/>
    </location>
</feature>
<feature type="helix" evidence="7">
    <location>
        <begin position="250"/>
        <end position="253"/>
    </location>
</feature>
<feature type="helix" evidence="7">
    <location>
        <begin position="255"/>
        <end position="277"/>
    </location>
</feature>
<feature type="strand" evidence="7">
    <location>
        <begin position="280"/>
        <end position="283"/>
    </location>
</feature>
<feature type="helix" evidence="7">
    <location>
        <begin position="288"/>
        <end position="294"/>
    </location>
</feature>
<feature type="strand" evidence="7">
    <location>
        <begin position="322"/>
        <end position="324"/>
    </location>
</feature>
<feature type="strand" evidence="7">
    <location>
        <begin position="338"/>
        <end position="341"/>
    </location>
</feature>
<feature type="helix" evidence="7">
    <location>
        <begin position="351"/>
        <end position="366"/>
    </location>
</feature>
<feature type="helix" evidence="7">
    <location>
        <begin position="370"/>
        <end position="374"/>
    </location>
</feature>
<feature type="helix" evidence="7">
    <location>
        <begin position="382"/>
        <end position="421"/>
    </location>
</feature>
<feature type="turn" evidence="7">
    <location>
        <begin position="435"/>
        <end position="437"/>
    </location>
</feature>
<feature type="helix" evidence="7">
    <location>
        <begin position="439"/>
        <end position="442"/>
    </location>
</feature>
<feature type="strand" evidence="7">
    <location>
        <begin position="445"/>
        <end position="449"/>
    </location>
</feature>
<feature type="helix" evidence="7">
    <location>
        <begin position="457"/>
        <end position="469"/>
    </location>
</feature>
<feature type="strand" evidence="7">
    <location>
        <begin position="470"/>
        <end position="472"/>
    </location>
</feature>
<feature type="helix" evidence="7">
    <location>
        <begin position="475"/>
        <end position="481"/>
    </location>
</feature>
<feature type="helix" evidence="7">
    <location>
        <begin position="486"/>
        <end position="503"/>
    </location>
</feature>
<accession>P03710</accession>